<proteinExistence type="evidence at transcript level"/>
<comment type="induction">
    <text>By viroid infection.</text>
</comment>
<comment type="similarity">
    <text evidence="3">Belongs to the protease inhibitor I20 (potato type II proteinase inhibitor) family.</text>
</comment>
<name>IP23_SOLLC</name>
<keyword id="KW-1015">Disulfide bond</keyword>
<keyword id="KW-0646">Protease inhibitor</keyword>
<keyword id="KW-1185">Reference proteome</keyword>
<keyword id="KW-0677">Repeat</keyword>
<keyword id="KW-0722">Serine protease inhibitor</keyword>
<keyword id="KW-0732">Signal</keyword>
<reference key="1">
    <citation type="journal article" date="1996" name="Mol. Plant Microbe Interact.">
        <title>Characterization of defense-related genes ectopically expressed in viroid-infected tomato plants.</title>
        <authorList>
            <person name="Gadea J."/>
            <person name="Mayda E."/>
            <person name="Conejero V."/>
            <person name="Vera P."/>
        </authorList>
    </citation>
    <scope>NUCLEOTIDE SEQUENCE [MRNA]</scope>
    <source>
        <strain>cv. Rutgers</strain>
        <tissue>Leaf</tissue>
    </source>
</reference>
<sequence>MAVYKVSFLAHLLVLGMYLLVSTVEHANACTKECGNLGYGICPGSEGSPENPICTNCCSGYKGCNYYYANGTFICEGTSDPKNPNICPSYCDPQIAYSKCPRSEGKTIIYPTGCTTCCTGYKGCYYFGQDGEFVCEGESIEPKGCTKECDPRVAYMTCPSSGLAKLNQVCVNCCSAGEGCKLYDNDGSLLCTGEPQSISTA</sequence>
<organism>
    <name type="scientific">Solanum lycopersicum</name>
    <name type="common">Tomato</name>
    <name type="synonym">Lycopersicon esculentum</name>
    <dbReference type="NCBI Taxonomy" id="4081"/>
    <lineage>
        <taxon>Eukaryota</taxon>
        <taxon>Viridiplantae</taxon>
        <taxon>Streptophyta</taxon>
        <taxon>Embryophyta</taxon>
        <taxon>Tracheophyta</taxon>
        <taxon>Spermatophyta</taxon>
        <taxon>Magnoliopsida</taxon>
        <taxon>eudicotyledons</taxon>
        <taxon>Gunneridae</taxon>
        <taxon>Pentapetalae</taxon>
        <taxon>asterids</taxon>
        <taxon>lamiids</taxon>
        <taxon>Solanales</taxon>
        <taxon>Solanaceae</taxon>
        <taxon>Solanoideae</taxon>
        <taxon>Solaneae</taxon>
        <taxon>Solanum</taxon>
        <taxon>Solanum subgen. Lycopersicon</taxon>
    </lineage>
</organism>
<protein>
    <recommendedName>
        <fullName>Proteinase inhibitor type-2 CEVI57</fullName>
    </recommendedName>
    <alternativeName>
        <fullName>Proteinase inhibitor type II CEVI57</fullName>
    </alternativeName>
</protein>
<gene>
    <name type="primary">CEVI57</name>
</gene>
<dbReference type="EMBL" id="X94946">
    <property type="protein sequence ID" value="CAA64416.1"/>
    <property type="molecule type" value="mRNA"/>
</dbReference>
<dbReference type="PIR" id="T07011">
    <property type="entry name" value="T07011"/>
</dbReference>
<dbReference type="SMR" id="Q43502"/>
<dbReference type="STRING" id="4081.Q43502"/>
<dbReference type="MEROPS" id="I20.001"/>
<dbReference type="PaxDb" id="4081-Solyc03g020050.2.1"/>
<dbReference type="eggNOG" id="ENOG502R7RQ">
    <property type="taxonomic scope" value="Eukaryota"/>
</dbReference>
<dbReference type="InParanoid" id="Q43502"/>
<dbReference type="Proteomes" id="UP000004994">
    <property type="component" value="Unplaced"/>
</dbReference>
<dbReference type="ExpressionAtlas" id="Q43502">
    <property type="expression patterns" value="baseline and differential"/>
</dbReference>
<dbReference type="GO" id="GO:0004867">
    <property type="term" value="F:serine-type endopeptidase inhibitor activity"/>
    <property type="evidence" value="ECO:0007669"/>
    <property type="project" value="UniProtKB-KW"/>
</dbReference>
<dbReference type="Gene3D" id="3.30.60.30">
    <property type="match status" value="3"/>
</dbReference>
<dbReference type="InterPro" id="IPR003465">
    <property type="entry name" value="Prot_inh_I20"/>
</dbReference>
<dbReference type="InterPro" id="IPR051391">
    <property type="entry name" value="Protease_inhibitor_I20"/>
</dbReference>
<dbReference type="PANTHER" id="PTHR33832:SF29">
    <property type="entry name" value="PROTEINASE INHIBITOR TYPE-2 CEVI57"/>
    <property type="match status" value="1"/>
</dbReference>
<dbReference type="PANTHER" id="PTHR33832">
    <property type="entry name" value="SERINE-TYPE ENDOPEPTIDASE INHIBITOR"/>
    <property type="match status" value="1"/>
</dbReference>
<dbReference type="Pfam" id="PF02428">
    <property type="entry name" value="Prot_inhib_II"/>
    <property type="match status" value="3"/>
</dbReference>
<dbReference type="SUPFAM" id="SSF100897">
    <property type="entry name" value="Plant proteinase inhibitors"/>
    <property type="match status" value="2"/>
</dbReference>
<feature type="signal peptide" evidence="2">
    <location>
        <begin position="1"/>
        <end position="23"/>
    </location>
</feature>
<feature type="chain" id="PRO_0000025312" description="Proteinase inhibitor type-2 CEVI57">
    <location>
        <begin position="24"/>
        <end position="201"/>
    </location>
</feature>
<feature type="repeat" description="1">
    <location>
        <begin position="27"/>
        <end position="83"/>
    </location>
</feature>
<feature type="repeat" description="2">
    <location>
        <begin position="84"/>
        <end position="143"/>
    </location>
</feature>
<feature type="repeat" description="3">
    <location>
        <begin position="144"/>
        <end position="199"/>
    </location>
</feature>
<feature type="site" description="Reactive bond for trypsin" evidence="3">
    <location>
        <begin position="32"/>
        <end position="33"/>
    </location>
</feature>
<feature type="site" description="Reactive bond for trypsin" evidence="3">
    <location>
        <begin position="147"/>
        <end position="148"/>
    </location>
</feature>
<feature type="disulfide bond" evidence="1">
    <location>
        <begin position="30"/>
        <end position="118"/>
    </location>
</feature>
<feature type="disulfide bond" evidence="1">
    <location>
        <begin position="34"/>
        <end position="114"/>
    </location>
</feature>
<feature type="disulfide bond" evidence="1">
    <location>
        <begin position="42"/>
        <end position="124"/>
    </location>
</feature>
<feature type="disulfide bond" evidence="1">
    <location>
        <begin position="54"/>
        <end position="91"/>
    </location>
</feature>
<feature type="disulfide bond" evidence="1">
    <location>
        <begin position="57"/>
        <end position="75"/>
    </location>
</feature>
<feature type="disulfide bond" evidence="1">
    <location>
        <begin position="58"/>
        <end position="87"/>
    </location>
</feature>
<feature type="disulfide bond" evidence="1">
    <location>
        <begin position="64"/>
        <end position="100"/>
    </location>
</feature>
<feature type="disulfide bond" evidence="1">
    <location>
        <begin position="117"/>
        <end position="135"/>
    </location>
</feature>
<evidence type="ECO:0000250" key="1"/>
<evidence type="ECO:0000255" key="2"/>
<evidence type="ECO:0000305" key="3"/>
<accession>Q43502</accession>